<feature type="chain" id="PRO_1000070252" description="Tyrosine recombinase XerS">
    <location>
        <begin position="1"/>
        <end position="356"/>
    </location>
</feature>
<feature type="domain" description="Core-binding (CB)" evidence="3">
    <location>
        <begin position="16"/>
        <end position="121"/>
    </location>
</feature>
<feature type="domain" description="Tyr recombinase" evidence="2">
    <location>
        <begin position="169"/>
        <end position="354"/>
    </location>
</feature>
<feature type="active site" evidence="1">
    <location>
        <position position="210"/>
    </location>
</feature>
<feature type="active site" evidence="1">
    <location>
        <position position="234"/>
    </location>
</feature>
<feature type="active site" evidence="1">
    <location>
        <position position="306"/>
    </location>
</feature>
<feature type="active site" evidence="1">
    <location>
        <position position="309"/>
    </location>
</feature>
<feature type="active site" evidence="1">
    <location>
        <position position="332"/>
    </location>
</feature>
<feature type="active site" description="O-(3'-phospho-DNA)-tyrosine intermediate" evidence="1">
    <location>
        <position position="341"/>
    </location>
</feature>
<name>XERS_STRT2</name>
<proteinExistence type="inferred from homology"/>
<dbReference type="EMBL" id="CP000023">
    <property type="protein sequence ID" value="AAV60668.1"/>
    <property type="molecule type" value="Genomic_DNA"/>
</dbReference>
<dbReference type="RefSeq" id="WP_011225974.1">
    <property type="nucleotide sequence ID" value="NC_006448.1"/>
</dbReference>
<dbReference type="SMR" id="Q5M4E9"/>
<dbReference type="STRING" id="264199.stu1008"/>
<dbReference type="KEGG" id="stl:stu1008"/>
<dbReference type="PATRIC" id="fig|264199.4.peg.1000"/>
<dbReference type="eggNOG" id="COG4974">
    <property type="taxonomic scope" value="Bacteria"/>
</dbReference>
<dbReference type="HOGENOM" id="CLU_027562_9_6_9"/>
<dbReference type="Proteomes" id="UP000001170">
    <property type="component" value="Chromosome"/>
</dbReference>
<dbReference type="GO" id="GO:0005737">
    <property type="term" value="C:cytoplasm"/>
    <property type="evidence" value="ECO:0007669"/>
    <property type="project" value="UniProtKB-SubCell"/>
</dbReference>
<dbReference type="GO" id="GO:0003677">
    <property type="term" value="F:DNA binding"/>
    <property type="evidence" value="ECO:0007669"/>
    <property type="project" value="UniProtKB-KW"/>
</dbReference>
<dbReference type="GO" id="GO:0009037">
    <property type="term" value="F:tyrosine-based site-specific recombinase activity"/>
    <property type="evidence" value="ECO:0007669"/>
    <property type="project" value="UniProtKB-UniRule"/>
</dbReference>
<dbReference type="GO" id="GO:0051301">
    <property type="term" value="P:cell division"/>
    <property type="evidence" value="ECO:0007669"/>
    <property type="project" value="UniProtKB-KW"/>
</dbReference>
<dbReference type="GO" id="GO:0007059">
    <property type="term" value="P:chromosome segregation"/>
    <property type="evidence" value="ECO:0007669"/>
    <property type="project" value="UniProtKB-UniRule"/>
</dbReference>
<dbReference type="GO" id="GO:0006310">
    <property type="term" value="P:DNA recombination"/>
    <property type="evidence" value="ECO:0007669"/>
    <property type="project" value="UniProtKB-UniRule"/>
</dbReference>
<dbReference type="CDD" id="cd00397">
    <property type="entry name" value="DNA_BRE_C"/>
    <property type="match status" value="1"/>
</dbReference>
<dbReference type="Gene3D" id="1.10.150.130">
    <property type="match status" value="1"/>
</dbReference>
<dbReference type="Gene3D" id="1.10.443.10">
    <property type="entry name" value="Intergrase catalytic core"/>
    <property type="match status" value="1"/>
</dbReference>
<dbReference type="HAMAP" id="MF_01816">
    <property type="entry name" value="Recomb_XerS"/>
    <property type="match status" value="1"/>
</dbReference>
<dbReference type="InterPro" id="IPR044068">
    <property type="entry name" value="CB"/>
</dbReference>
<dbReference type="InterPro" id="IPR011010">
    <property type="entry name" value="DNA_brk_join_enz"/>
</dbReference>
<dbReference type="InterPro" id="IPR013762">
    <property type="entry name" value="Integrase-like_cat_sf"/>
</dbReference>
<dbReference type="InterPro" id="IPR002104">
    <property type="entry name" value="Integrase_catalytic"/>
</dbReference>
<dbReference type="InterPro" id="IPR010998">
    <property type="entry name" value="Integrase_recombinase_N"/>
</dbReference>
<dbReference type="InterPro" id="IPR004107">
    <property type="entry name" value="Integrase_SAM-like_N"/>
</dbReference>
<dbReference type="InterPro" id="IPR023670">
    <property type="entry name" value="Recomb_XerS"/>
</dbReference>
<dbReference type="InterPro" id="IPR050090">
    <property type="entry name" value="Tyrosine_recombinase_XerCD"/>
</dbReference>
<dbReference type="NCBIfam" id="NF003462">
    <property type="entry name" value="PRK05084.1"/>
    <property type="match status" value="1"/>
</dbReference>
<dbReference type="PANTHER" id="PTHR30349">
    <property type="entry name" value="PHAGE INTEGRASE-RELATED"/>
    <property type="match status" value="1"/>
</dbReference>
<dbReference type="PANTHER" id="PTHR30349:SF77">
    <property type="entry name" value="TYROSINE RECOMBINASE XERC"/>
    <property type="match status" value="1"/>
</dbReference>
<dbReference type="Pfam" id="PF02899">
    <property type="entry name" value="Phage_int_SAM_1"/>
    <property type="match status" value="1"/>
</dbReference>
<dbReference type="Pfam" id="PF00589">
    <property type="entry name" value="Phage_integrase"/>
    <property type="match status" value="1"/>
</dbReference>
<dbReference type="SUPFAM" id="SSF56349">
    <property type="entry name" value="DNA breaking-rejoining enzymes"/>
    <property type="match status" value="1"/>
</dbReference>
<dbReference type="PROSITE" id="PS51900">
    <property type="entry name" value="CB"/>
    <property type="match status" value="1"/>
</dbReference>
<dbReference type="PROSITE" id="PS51898">
    <property type="entry name" value="TYR_RECOMBINASE"/>
    <property type="match status" value="1"/>
</dbReference>
<sequence>MKRELLLEKIEEYKSLMPWFVLEYYQSKLSVPYSFTTLYEYLKEYKRFFNWLIDSGISDADDIASIHIKTLENLTKKDMESFVLYLRERPSLNTYSKKQGVSQTTINRTLSALSCLYKYLTEEVEGPDGEPYFYRNVMKKISTKKKKETLAARAENIKQKLFLGDETMKFLDYVENEYEVKLSNRAKSSFYKNKERDLAIIALLLSSGVRLSEAVNLDLKDINLKRMVIDVTRKGGQRDSVNMASFARPYLENYLSIRNKRYKAEKQDVALFLTEYRGVPNRIDASSIEKMVAKYSQDFKIRVTPHKLRHTLATRLYDATKSQVLVSHQLGHASTQVTDLYTHIVNDEQKNALDNL</sequence>
<protein>
    <recommendedName>
        <fullName evidence="1">Tyrosine recombinase XerS</fullName>
    </recommendedName>
</protein>
<gene>
    <name evidence="1" type="primary">xerS</name>
    <name type="ordered locus">stu1008</name>
</gene>
<evidence type="ECO:0000255" key="1">
    <source>
        <dbReference type="HAMAP-Rule" id="MF_01816"/>
    </source>
</evidence>
<evidence type="ECO:0000255" key="2">
    <source>
        <dbReference type="PROSITE-ProRule" id="PRU01246"/>
    </source>
</evidence>
<evidence type="ECO:0000255" key="3">
    <source>
        <dbReference type="PROSITE-ProRule" id="PRU01248"/>
    </source>
</evidence>
<accession>Q5M4E9</accession>
<comment type="function">
    <text evidence="1">Site-specific tyrosine recombinase, which acts by catalyzing the cutting and rejoining of the recombining DNA molecules. Essential to convert dimers of the bacterial chromosome into monomers to permit their segregation at cell division.</text>
</comment>
<comment type="activity regulation">
    <text evidence="1">FtsK is required for recombination.</text>
</comment>
<comment type="subcellular location">
    <subcellularLocation>
        <location evidence="1">Cytoplasm</location>
    </subcellularLocation>
</comment>
<comment type="similarity">
    <text evidence="1">Belongs to the 'phage' integrase family. XerS subfamily.</text>
</comment>
<keyword id="KW-0131">Cell cycle</keyword>
<keyword id="KW-0132">Cell division</keyword>
<keyword id="KW-0159">Chromosome partition</keyword>
<keyword id="KW-0963">Cytoplasm</keyword>
<keyword id="KW-0229">DNA integration</keyword>
<keyword id="KW-0233">DNA recombination</keyword>
<keyword id="KW-0238">DNA-binding</keyword>
<keyword id="KW-1185">Reference proteome</keyword>
<organism>
    <name type="scientific">Streptococcus thermophilus (strain ATCC BAA-250 / LMG 18311)</name>
    <dbReference type="NCBI Taxonomy" id="264199"/>
    <lineage>
        <taxon>Bacteria</taxon>
        <taxon>Bacillati</taxon>
        <taxon>Bacillota</taxon>
        <taxon>Bacilli</taxon>
        <taxon>Lactobacillales</taxon>
        <taxon>Streptococcaceae</taxon>
        <taxon>Streptococcus</taxon>
    </lineage>
</organism>
<reference key="1">
    <citation type="journal article" date="2004" name="Nat. Biotechnol.">
        <title>Complete sequence and comparative genome analysis of the dairy bacterium Streptococcus thermophilus.</title>
        <authorList>
            <person name="Bolotin A."/>
            <person name="Quinquis B."/>
            <person name="Renault P."/>
            <person name="Sorokin A."/>
            <person name="Ehrlich S.D."/>
            <person name="Kulakauskas S."/>
            <person name="Lapidus A."/>
            <person name="Goltsman E."/>
            <person name="Mazur M."/>
            <person name="Pusch G.D."/>
            <person name="Fonstein M."/>
            <person name="Overbeek R."/>
            <person name="Kyprides N."/>
            <person name="Purnelle B."/>
            <person name="Prozzi D."/>
            <person name="Ngui K."/>
            <person name="Masuy D."/>
            <person name="Hancy F."/>
            <person name="Burteau S."/>
            <person name="Boutry M."/>
            <person name="Delcour J."/>
            <person name="Goffeau A."/>
            <person name="Hols P."/>
        </authorList>
    </citation>
    <scope>NUCLEOTIDE SEQUENCE [LARGE SCALE GENOMIC DNA]</scope>
    <source>
        <strain>ATCC BAA-250 / LMG 18311</strain>
    </source>
</reference>